<keyword id="KW-0028">Amino-acid biosynthesis</keyword>
<keyword id="KW-0368">Histidine biosynthesis</keyword>
<keyword id="KW-0378">Hydrolase</keyword>
<keyword id="KW-0486">Methionine biosynthesis</keyword>
<keyword id="KW-0511">Multifunctional enzyme</keyword>
<keyword id="KW-0521">NADP</keyword>
<keyword id="KW-0554">One-carbon metabolism</keyword>
<keyword id="KW-0560">Oxidoreductase</keyword>
<keyword id="KW-0658">Purine biosynthesis</keyword>
<keyword id="KW-1185">Reference proteome</keyword>
<evidence type="ECO:0000255" key="1">
    <source>
        <dbReference type="HAMAP-Rule" id="MF_01576"/>
    </source>
</evidence>
<feature type="chain" id="PRO_0000268457" description="Bifunctional protein FolD">
    <location>
        <begin position="1"/>
        <end position="285"/>
    </location>
</feature>
<feature type="binding site" evidence="1">
    <location>
        <begin position="165"/>
        <end position="167"/>
    </location>
    <ligand>
        <name>NADP(+)</name>
        <dbReference type="ChEBI" id="CHEBI:58349"/>
    </ligand>
</feature>
<feature type="binding site" evidence="1">
    <location>
        <position position="190"/>
    </location>
    <ligand>
        <name>NADP(+)</name>
        <dbReference type="ChEBI" id="CHEBI:58349"/>
    </ligand>
</feature>
<sequence>MSAHLIDGNALAKQIRAEAAQRAARLTAAGHQPGLAVVLVGEDPASQVYVRNKVKACEDNGFYSSLNRYPADLSEADLLARIDELNNDPKIHGILVQLPLPKHIDSHKVLEAIAPEKDVDGFHVANAGALMTGAPLFRPCTPYGCMKMLESIQYPLRGARAVVVGASNIVGKPMAMMLLQAGATVTICNSKTRDLAAHTRDADVIVAAVGRRNIITADIVKPGAVVIDVGMNRDDAGKLCGDVDFAGVREVAGHITPVPGGVGPMTITMLLINTLEAAEREAGIA</sequence>
<comment type="function">
    <text evidence="1">Catalyzes the oxidation of 5,10-methylenetetrahydrofolate to 5,10-methenyltetrahydrofolate and then the hydrolysis of 5,10-methenyltetrahydrofolate to 10-formyltetrahydrofolate.</text>
</comment>
<comment type="catalytic activity">
    <reaction evidence="1">
        <text>(6R)-5,10-methylene-5,6,7,8-tetrahydrofolate + NADP(+) = (6R)-5,10-methenyltetrahydrofolate + NADPH</text>
        <dbReference type="Rhea" id="RHEA:22812"/>
        <dbReference type="ChEBI" id="CHEBI:15636"/>
        <dbReference type="ChEBI" id="CHEBI:57455"/>
        <dbReference type="ChEBI" id="CHEBI:57783"/>
        <dbReference type="ChEBI" id="CHEBI:58349"/>
        <dbReference type="EC" id="1.5.1.5"/>
    </reaction>
</comment>
<comment type="catalytic activity">
    <reaction evidence="1">
        <text>(6R)-5,10-methenyltetrahydrofolate + H2O = (6R)-10-formyltetrahydrofolate + H(+)</text>
        <dbReference type="Rhea" id="RHEA:23700"/>
        <dbReference type="ChEBI" id="CHEBI:15377"/>
        <dbReference type="ChEBI" id="CHEBI:15378"/>
        <dbReference type="ChEBI" id="CHEBI:57455"/>
        <dbReference type="ChEBI" id="CHEBI:195366"/>
        <dbReference type="EC" id="3.5.4.9"/>
    </reaction>
</comment>
<comment type="pathway">
    <text evidence="1">One-carbon metabolism; tetrahydrofolate interconversion.</text>
</comment>
<comment type="subunit">
    <text evidence="1">Homodimer.</text>
</comment>
<comment type="similarity">
    <text evidence="1">Belongs to the tetrahydrofolate dehydrogenase/cyclohydrolase family.</text>
</comment>
<protein>
    <recommendedName>
        <fullName evidence="1">Bifunctional protein FolD</fullName>
    </recommendedName>
    <domain>
        <recommendedName>
            <fullName evidence="1">Methylenetetrahydrofolate dehydrogenase</fullName>
            <ecNumber evidence="1">1.5.1.5</ecNumber>
        </recommendedName>
    </domain>
    <domain>
        <recommendedName>
            <fullName evidence="1">Methenyltetrahydrofolate cyclohydrolase</fullName>
            <ecNumber evidence="1">3.5.4.9</ecNumber>
        </recommendedName>
    </domain>
</protein>
<organism>
    <name type="scientific">Cupriavidus metallidurans (strain ATCC 43123 / DSM 2839 / NBRC 102507 / CH34)</name>
    <name type="common">Ralstonia metallidurans</name>
    <dbReference type="NCBI Taxonomy" id="266264"/>
    <lineage>
        <taxon>Bacteria</taxon>
        <taxon>Pseudomonadati</taxon>
        <taxon>Pseudomonadota</taxon>
        <taxon>Betaproteobacteria</taxon>
        <taxon>Burkholderiales</taxon>
        <taxon>Burkholderiaceae</taxon>
        <taxon>Cupriavidus</taxon>
    </lineage>
</organism>
<proteinExistence type="inferred from homology"/>
<name>FOLD_CUPMC</name>
<accession>Q1LP48</accession>
<gene>
    <name evidence="1" type="primary">folD</name>
    <name type="ordered locus">Rmet_1192</name>
</gene>
<reference key="1">
    <citation type="journal article" date="2010" name="PLoS ONE">
        <title>The complete genome sequence of Cupriavidus metallidurans strain CH34, a master survivalist in harsh and anthropogenic environments.</title>
        <authorList>
            <person name="Janssen P.J."/>
            <person name="Van Houdt R."/>
            <person name="Moors H."/>
            <person name="Monsieurs P."/>
            <person name="Morin N."/>
            <person name="Michaux A."/>
            <person name="Benotmane M.A."/>
            <person name="Leys N."/>
            <person name="Vallaeys T."/>
            <person name="Lapidus A."/>
            <person name="Monchy S."/>
            <person name="Medigue C."/>
            <person name="Taghavi S."/>
            <person name="McCorkle S."/>
            <person name="Dunn J."/>
            <person name="van der Lelie D."/>
            <person name="Mergeay M."/>
        </authorList>
    </citation>
    <scope>NUCLEOTIDE SEQUENCE [LARGE SCALE GENOMIC DNA]</scope>
    <source>
        <strain>ATCC 43123 / DSM 2839 / NBRC 102507 / CH34</strain>
    </source>
</reference>
<dbReference type="EC" id="1.5.1.5" evidence="1"/>
<dbReference type="EC" id="3.5.4.9" evidence="1"/>
<dbReference type="EMBL" id="CP000352">
    <property type="protein sequence ID" value="ABF08078.1"/>
    <property type="molecule type" value="Genomic_DNA"/>
</dbReference>
<dbReference type="RefSeq" id="WP_011515972.1">
    <property type="nucleotide sequence ID" value="NC_007973.1"/>
</dbReference>
<dbReference type="SMR" id="Q1LP48"/>
<dbReference type="STRING" id="266264.Rmet_1192"/>
<dbReference type="KEGG" id="rme:Rmet_1192"/>
<dbReference type="eggNOG" id="COG0190">
    <property type="taxonomic scope" value="Bacteria"/>
</dbReference>
<dbReference type="HOGENOM" id="CLU_034045_2_1_4"/>
<dbReference type="UniPathway" id="UPA00193"/>
<dbReference type="Proteomes" id="UP000002429">
    <property type="component" value="Chromosome"/>
</dbReference>
<dbReference type="GO" id="GO:0005829">
    <property type="term" value="C:cytosol"/>
    <property type="evidence" value="ECO:0007669"/>
    <property type="project" value="TreeGrafter"/>
</dbReference>
<dbReference type="GO" id="GO:0004477">
    <property type="term" value="F:methenyltetrahydrofolate cyclohydrolase activity"/>
    <property type="evidence" value="ECO:0007669"/>
    <property type="project" value="UniProtKB-UniRule"/>
</dbReference>
<dbReference type="GO" id="GO:0004488">
    <property type="term" value="F:methylenetetrahydrofolate dehydrogenase (NADP+) activity"/>
    <property type="evidence" value="ECO:0007669"/>
    <property type="project" value="UniProtKB-UniRule"/>
</dbReference>
<dbReference type="GO" id="GO:0000105">
    <property type="term" value="P:L-histidine biosynthetic process"/>
    <property type="evidence" value="ECO:0007669"/>
    <property type="project" value="UniProtKB-KW"/>
</dbReference>
<dbReference type="GO" id="GO:0009086">
    <property type="term" value="P:methionine biosynthetic process"/>
    <property type="evidence" value="ECO:0007669"/>
    <property type="project" value="UniProtKB-KW"/>
</dbReference>
<dbReference type="GO" id="GO:0006164">
    <property type="term" value="P:purine nucleotide biosynthetic process"/>
    <property type="evidence" value="ECO:0007669"/>
    <property type="project" value="UniProtKB-KW"/>
</dbReference>
<dbReference type="GO" id="GO:0035999">
    <property type="term" value="P:tetrahydrofolate interconversion"/>
    <property type="evidence" value="ECO:0007669"/>
    <property type="project" value="UniProtKB-UniRule"/>
</dbReference>
<dbReference type="CDD" id="cd01080">
    <property type="entry name" value="NAD_bind_m-THF_DH_Cyclohyd"/>
    <property type="match status" value="1"/>
</dbReference>
<dbReference type="FunFam" id="3.40.50.10860:FF:000001">
    <property type="entry name" value="Bifunctional protein FolD"/>
    <property type="match status" value="1"/>
</dbReference>
<dbReference type="FunFam" id="3.40.50.720:FF:000094">
    <property type="entry name" value="Bifunctional protein FolD"/>
    <property type="match status" value="1"/>
</dbReference>
<dbReference type="Gene3D" id="3.40.50.10860">
    <property type="entry name" value="Leucine Dehydrogenase, chain A, domain 1"/>
    <property type="match status" value="1"/>
</dbReference>
<dbReference type="Gene3D" id="3.40.50.720">
    <property type="entry name" value="NAD(P)-binding Rossmann-like Domain"/>
    <property type="match status" value="1"/>
</dbReference>
<dbReference type="HAMAP" id="MF_01576">
    <property type="entry name" value="THF_DHG_CYH"/>
    <property type="match status" value="1"/>
</dbReference>
<dbReference type="InterPro" id="IPR046346">
    <property type="entry name" value="Aminoacid_DH-like_N_sf"/>
</dbReference>
<dbReference type="InterPro" id="IPR036291">
    <property type="entry name" value="NAD(P)-bd_dom_sf"/>
</dbReference>
<dbReference type="InterPro" id="IPR000672">
    <property type="entry name" value="THF_DH/CycHdrlase"/>
</dbReference>
<dbReference type="InterPro" id="IPR020630">
    <property type="entry name" value="THF_DH/CycHdrlase_cat_dom"/>
</dbReference>
<dbReference type="InterPro" id="IPR020867">
    <property type="entry name" value="THF_DH/CycHdrlase_CS"/>
</dbReference>
<dbReference type="InterPro" id="IPR020631">
    <property type="entry name" value="THF_DH/CycHdrlase_NAD-bd_dom"/>
</dbReference>
<dbReference type="NCBIfam" id="NF008058">
    <property type="entry name" value="PRK10792.1"/>
    <property type="match status" value="1"/>
</dbReference>
<dbReference type="NCBIfam" id="NF010783">
    <property type="entry name" value="PRK14186.1"/>
    <property type="match status" value="1"/>
</dbReference>
<dbReference type="NCBIfam" id="NF010786">
    <property type="entry name" value="PRK14189.1"/>
    <property type="match status" value="1"/>
</dbReference>
<dbReference type="PANTHER" id="PTHR48099:SF5">
    <property type="entry name" value="C-1-TETRAHYDROFOLATE SYNTHASE, CYTOPLASMIC"/>
    <property type="match status" value="1"/>
</dbReference>
<dbReference type="PANTHER" id="PTHR48099">
    <property type="entry name" value="C-1-TETRAHYDROFOLATE SYNTHASE, CYTOPLASMIC-RELATED"/>
    <property type="match status" value="1"/>
</dbReference>
<dbReference type="Pfam" id="PF00763">
    <property type="entry name" value="THF_DHG_CYH"/>
    <property type="match status" value="1"/>
</dbReference>
<dbReference type="Pfam" id="PF02882">
    <property type="entry name" value="THF_DHG_CYH_C"/>
    <property type="match status" value="1"/>
</dbReference>
<dbReference type="PRINTS" id="PR00085">
    <property type="entry name" value="THFDHDRGNASE"/>
</dbReference>
<dbReference type="SUPFAM" id="SSF53223">
    <property type="entry name" value="Aminoacid dehydrogenase-like, N-terminal domain"/>
    <property type="match status" value="1"/>
</dbReference>
<dbReference type="SUPFAM" id="SSF51735">
    <property type="entry name" value="NAD(P)-binding Rossmann-fold domains"/>
    <property type="match status" value="1"/>
</dbReference>
<dbReference type="PROSITE" id="PS00766">
    <property type="entry name" value="THF_DHG_CYH_1"/>
    <property type="match status" value="1"/>
</dbReference>
<dbReference type="PROSITE" id="PS00767">
    <property type="entry name" value="THF_DHG_CYH_2"/>
    <property type="match status" value="1"/>
</dbReference>